<reference key="1">
    <citation type="journal article" date="2005" name="BMC Biol.">
        <title>The complete chloroplast DNA sequences of the charophycean green algae Staurastrum and Zygnema reveal that the chloroplast genome underwent extensive changes during the evolution of the Zygnematales.</title>
        <authorList>
            <person name="Turmel M."/>
            <person name="Otis C."/>
            <person name="Lemieux C."/>
        </authorList>
    </citation>
    <scope>NUCLEOTIDE SEQUENCE [LARGE SCALE GENOMIC DNA]</scope>
</reference>
<organism>
    <name type="scientific">Staurastrum punctulatum</name>
    <name type="common">Green alga</name>
    <name type="synonym">Cosmoastrum punctulatum</name>
    <dbReference type="NCBI Taxonomy" id="102822"/>
    <lineage>
        <taxon>Eukaryota</taxon>
        <taxon>Viridiplantae</taxon>
        <taxon>Streptophyta</taxon>
        <taxon>Zygnematophyceae</taxon>
        <taxon>Zygnematophycidae</taxon>
        <taxon>Desmidiales</taxon>
        <taxon>Desmidiaceae</taxon>
        <taxon>Staurastrum</taxon>
    </lineage>
</organism>
<dbReference type="EMBL" id="AY958085">
    <property type="protein sequence ID" value="AAX45760.1"/>
    <property type="molecule type" value="Genomic_DNA"/>
</dbReference>
<dbReference type="RefSeq" id="YP_636416.1">
    <property type="nucleotide sequence ID" value="NC_008116.1"/>
</dbReference>
<dbReference type="SMR" id="Q32RW0"/>
<dbReference type="GeneID" id="4108634"/>
<dbReference type="GO" id="GO:0009507">
    <property type="term" value="C:chloroplast"/>
    <property type="evidence" value="ECO:0007669"/>
    <property type="project" value="UniProtKB-SubCell"/>
</dbReference>
<dbReference type="GO" id="GO:0015935">
    <property type="term" value="C:small ribosomal subunit"/>
    <property type="evidence" value="ECO:0007669"/>
    <property type="project" value="InterPro"/>
</dbReference>
<dbReference type="GO" id="GO:0019843">
    <property type="term" value="F:rRNA binding"/>
    <property type="evidence" value="ECO:0007669"/>
    <property type="project" value="UniProtKB-UniRule"/>
</dbReference>
<dbReference type="GO" id="GO:0003735">
    <property type="term" value="F:structural constituent of ribosome"/>
    <property type="evidence" value="ECO:0007669"/>
    <property type="project" value="InterPro"/>
</dbReference>
<dbReference type="GO" id="GO:0006412">
    <property type="term" value="P:translation"/>
    <property type="evidence" value="ECO:0007669"/>
    <property type="project" value="UniProtKB-UniRule"/>
</dbReference>
<dbReference type="CDD" id="cd14871">
    <property type="entry name" value="uS7_Chloroplast"/>
    <property type="match status" value="1"/>
</dbReference>
<dbReference type="FunFam" id="1.10.455.10:FF:000001">
    <property type="entry name" value="30S ribosomal protein S7"/>
    <property type="match status" value="1"/>
</dbReference>
<dbReference type="Gene3D" id="1.10.455.10">
    <property type="entry name" value="Ribosomal protein S7 domain"/>
    <property type="match status" value="1"/>
</dbReference>
<dbReference type="HAMAP" id="MF_00480_B">
    <property type="entry name" value="Ribosomal_uS7_B"/>
    <property type="match status" value="1"/>
</dbReference>
<dbReference type="InterPro" id="IPR000235">
    <property type="entry name" value="Ribosomal_uS7"/>
</dbReference>
<dbReference type="InterPro" id="IPR005717">
    <property type="entry name" value="Ribosomal_uS7_bac/org-type"/>
</dbReference>
<dbReference type="InterPro" id="IPR020606">
    <property type="entry name" value="Ribosomal_uS7_CS"/>
</dbReference>
<dbReference type="InterPro" id="IPR023798">
    <property type="entry name" value="Ribosomal_uS7_dom"/>
</dbReference>
<dbReference type="InterPro" id="IPR036823">
    <property type="entry name" value="Ribosomal_uS7_dom_sf"/>
</dbReference>
<dbReference type="NCBIfam" id="TIGR01029">
    <property type="entry name" value="rpsG_bact"/>
    <property type="match status" value="1"/>
</dbReference>
<dbReference type="PANTHER" id="PTHR11205">
    <property type="entry name" value="RIBOSOMAL PROTEIN S7"/>
    <property type="match status" value="1"/>
</dbReference>
<dbReference type="Pfam" id="PF00177">
    <property type="entry name" value="Ribosomal_S7"/>
    <property type="match status" value="1"/>
</dbReference>
<dbReference type="PIRSF" id="PIRSF002122">
    <property type="entry name" value="RPS7p_RPS7a_RPS5e_RPS7o"/>
    <property type="match status" value="1"/>
</dbReference>
<dbReference type="SUPFAM" id="SSF47973">
    <property type="entry name" value="Ribosomal protein S7"/>
    <property type="match status" value="1"/>
</dbReference>
<dbReference type="PROSITE" id="PS00052">
    <property type="entry name" value="RIBOSOMAL_S7"/>
    <property type="match status" value="1"/>
</dbReference>
<comment type="function">
    <text evidence="1">One of the primary rRNA binding proteins, it binds directly to 16S rRNA where it nucleates assembly of the head domain of the 30S subunit.</text>
</comment>
<comment type="subunit">
    <text>Part of the 30S ribosomal subunit.</text>
</comment>
<comment type="subcellular location">
    <subcellularLocation>
        <location>Plastid</location>
        <location>Chloroplast</location>
    </subcellularLocation>
</comment>
<comment type="similarity">
    <text evidence="2">Belongs to the universal ribosomal protein uS7 family.</text>
</comment>
<gene>
    <name type="primary">rps7</name>
</gene>
<keyword id="KW-0150">Chloroplast</keyword>
<keyword id="KW-0934">Plastid</keyword>
<keyword id="KW-0687">Ribonucleoprotein</keyword>
<keyword id="KW-0689">Ribosomal protein</keyword>
<keyword id="KW-0694">RNA-binding</keyword>
<keyword id="KW-0699">rRNA-binding</keyword>
<name>RR7_STAPU</name>
<feature type="chain" id="PRO_0000277060" description="Small ribosomal subunit protein uS7c">
    <location>
        <begin position="1"/>
        <end position="155"/>
    </location>
</feature>
<evidence type="ECO:0000250" key="1"/>
<evidence type="ECO:0000305" key="2"/>
<accession>Q32RW0</accession>
<geneLocation type="chloroplast"/>
<proteinExistence type="inferred from homology"/>
<sequence length="155" mass="17775">MSRRSTNEGRLTRPNPVYRNRLVNMLVNIILKNGKKSVAYRILHEAMKTIQQKTKKNPLAVVRQAIRRVTPNVAVKARRRGGSTYQVPVEIKPDQGKALAVRWILAAARKRPGRSMAFKLSYELMDAARQTGNAIRKREETHRMAEANKAFAHYR</sequence>
<protein>
    <recommendedName>
        <fullName evidence="2">Small ribosomal subunit protein uS7c</fullName>
    </recommendedName>
    <alternativeName>
        <fullName>30S ribosomal protein S7, chloroplastic</fullName>
    </alternativeName>
</protein>